<proteinExistence type="inferred from homology"/>
<protein>
    <recommendedName>
        <fullName evidence="1">Isocitrate dehydrogenase kinase/phosphatase</fullName>
        <shortName evidence="1">IDH kinase/phosphatase</shortName>
        <shortName evidence="1">IDHK/P</shortName>
        <ecNumber evidence="1">2.7.11.5</ecNumber>
        <ecNumber evidence="1">3.1.3.-</ecNumber>
    </recommendedName>
</protein>
<organism>
    <name type="scientific">Salmonella typhimurium (strain LT2 / SGSC1412 / ATCC 700720)</name>
    <dbReference type="NCBI Taxonomy" id="99287"/>
    <lineage>
        <taxon>Bacteria</taxon>
        <taxon>Pseudomonadati</taxon>
        <taxon>Pseudomonadota</taxon>
        <taxon>Gammaproteobacteria</taxon>
        <taxon>Enterobacterales</taxon>
        <taxon>Enterobacteriaceae</taxon>
        <taxon>Salmonella</taxon>
    </lineage>
</organism>
<feature type="chain" id="PRO_0000057909" description="Isocitrate dehydrogenase kinase/phosphatase">
    <location>
        <begin position="1"/>
        <end position="583"/>
    </location>
</feature>
<feature type="active site" evidence="1">
    <location>
        <position position="371"/>
    </location>
</feature>
<feature type="binding site" evidence="1">
    <location>
        <begin position="315"/>
        <end position="321"/>
    </location>
    <ligand>
        <name>ATP</name>
        <dbReference type="ChEBI" id="CHEBI:30616"/>
    </ligand>
</feature>
<feature type="binding site" evidence="1">
    <location>
        <position position="336"/>
    </location>
    <ligand>
        <name>ATP</name>
        <dbReference type="ChEBI" id="CHEBI:30616"/>
    </ligand>
</feature>
<feature type="sequence variant" description="In strain: S2980 and S2983.">
    <original>P</original>
    <variation>S</variation>
    <location>
        <position position="2"/>
    </location>
</feature>
<feature type="sequence variant" description="In strain: S2978 and S2979.">
    <original>G</original>
    <variation>C</variation>
    <location>
        <position position="4"/>
    </location>
</feature>
<feature type="sequence variant" description="In strain: S3333.">
    <original>Q</original>
    <variation>R</variation>
    <location>
        <position position="20"/>
    </location>
</feature>
<feature type="sequence variant" description="In strain: S2978 and S2979.">
    <original>H</original>
    <variation>Q</variation>
    <location>
        <position position="41"/>
    </location>
</feature>
<feature type="sequence variant" description="In strain: S2980 and S2983.">
    <original>S</original>
    <variation>N</variation>
    <location>
        <position position="73"/>
    </location>
</feature>
<feature type="sequence variant" description="In strain: S2980, S2983, S3013, S3014, S3015 and S3027.">
    <original>D</original>
    <variation>N</variation>
    <location>
        <position position="77"/>
    </location>
</feature>
<feature type="sequence variant" description="In strain: S3041 and S3044.">
    <original>DH</original>
    <variation>EQ</variation>
    <location>
        <begin position="146"/>
        <end position="147"/>
    </location>
</feature>
<feature type="sequence variant" description="In strain: S2980 and S2983.">
    <original>P</original>
    <variation>L</variation>
    <location>
        <position position="151"/>
    </location>
</feature>
<feature type="sequence variant" description="In strain: S2978, S2979 and S2993.">
    <original>P</original>
    <variation>S</variation>
    <location>
        <position position="151"/>
    </location>
</feature>
<feature type="sequence variant" description="In strain: S3041 and S3044.">
    <original>M</original>
    <variation>V</variation>
    <location>
        <position position="154"/>
    </location>
</feature>
<feature type="sequence variant" description="In strain: S3044.">
    <original>I</original>
    <variation>M</variation>
    <location>
        <position position="156"/>
    </location>
</feature>
<feature type="sequence variant" description="In strain: S3333.">
    <original>R</original>
    <variation>C</variation>
    <location>
        <position position="163"/>
    </location>
</feature>
<feature type="sequence variant" description="In strain: S3015 and S3027.">
    <original>Q</original>
    <variation>L</variation>
    <location>
        <position position="167"/>
    </location>
</feature>
<feature type="sequence variant" description="In strain: S3013, S3014, S3015 and S3027.">
    <original>S</original>
    <variation>R</variation>
    <location>
        <position position="170"/>
    </location>
</feature>
<feature type="sequence variant" description="In strain: S3041 and S3044.">
    <original>R</original>
    <variation>H</variation>
    <location>
        <position position="174"/>
    </location>
</feature>
<feature type="sequence variant" description="In strain: S3015 and S3027.">
    <original>T</original>
    <variation>A</variation>
    <location>
        <position position="181"/>
    </location>
</feature>
<feature type="sequence variant" description="In strain: S3015 and S3027.">
    <original>T</original>
    <variation>A</variation>
    <location>
        <position position="183"/>
    </location>
</feature>
<feature type="sequence variant" description="In strain: S2980 and S2983.">
    <original>T</original>
    <variation>I</variation>
    <location>
        <position position="183"/>
    </location>
</feature>
<feature type="sequence variant" description="In strain: S3041 and S3044.">
    <original>L</original>
    <variation>F</variation>
    <location>
        <position position="184"/>
    </location>
</feature>
<feature type="sequence variant" description="In strain: S3041 and S3044.">
    <original>EDA</original>
    <variation>AEG</variation>
    <location>
        <begin position="186"/>
        <end position="188"/>
    </location>
</feature>
<feature type="sequence variant" description="In strain: S3014.">
    <original>A</original>
    <variation>G</variation>
    <location>
        <position position="188"/>
    </location>
</feature>
<feature type="sequence variant" description="In strain: S2980, S2983, S3041 and S3044.">
    <original>V</original>
    <variation>L</variation>
    <location>
        <position position="194"/>
    </location>
</feature>
<feature type="sequence variant" description="In strain: S3041.">
    <original>A</original>
    <variation>T</variation>
    <location>
        <position position="197"/>
    </location>
</feature>
<feature type="sequence variant" description="In strain: S3041 and S3044.">
    <original>LT</original>
    <variation>FI</variation>
    <location>
        <begin position="213"/>
        <end position="214"/>
    </location>
</feature>
<feature type="sequence variant" description="In strain: S2980 and S2983.">
    <original>T</original>
    <variation>A</variation>
    <location>
        <position position="214"/>
    </location>
</feature>
<feature type="sequence variant" description="In strain: S3041 and S3044.">
    <original>C</original>
    <variation>G</variation>
    <location>
        <position position="303"/>
    </location>
</feature>
<feature type="sequence variant" description="In strain: S3041 and S3044.">
    <original>E</original>
    <variation>N</variation>
    <location>
        <position position="307"/>
    </location>
</feature>
<feature type="sequence variant" description="In strain: S3041 and S3044.">
    <original>M</original>
    <variation>V</variation>
    <location>
        <position position="348"/>
    </location>
</feature>
<feature type="sequence variant" description="In strain: S3041 and S3044.">
    <original>RQ</original>
    <variation>QR</variation>
    <location>
        <begin position="383"/>
        <end position="384"/>
    </location>
</feature>
<feature type="sequence variant" description="In strain: S2995 and S3057.">
    <original>A</original>
    <variation>T</variation>
    <location>
        <position position="391"/>
    </location>
</feature>
<feature type="sequence variant" description="In strain: S2980, S2983, S3041 and S3044.">
    <original>R</original>
    <variation>Q</variation>
    <location>
        <position position="394"/>
    </location>
</feature>
<feature type="sequence variant" description="In strain: S2978, S2979, S2993, S2995, S3013, S3014, S3015, S3027, S3041, S3044 and S3057.">
    <original>H</original>
    <variation>Q</variation>
    <location>
        <position position="407"/>
    </location>
</feature>
<feature type="sequence variant" description="In strain: S3041 and S3044.">
    <original>V</original>
    <variation>A</variation>
    <location>
        <position position="409"/>
    </location>
</feature>
<feature type="sequence variant" description="In strain: S2993.">
    <original>R</original>
    <variation>C</variation>
    <location>
        <position position="411"/>
    </location>
</feature>
<feature type="sequence variant" description="In strain: S3041 and S3044.">
    <original>V</original>
    <variation>A</variation>
    <location>
        <position position="429"/>
    </location>
</feature>
<feature type="sequence variant" description="In strain: S3041 and S3044.">
    <original>N</original>
    <variation>H</variation>
    <location>
        <position position="486"/>
    </location>
</feature>
<feature type="sequence variant" description="In strain: S3044.">
    <original>P</original>
    <variation>T</variation>
    <location>
        <position position="492"/>
    </location>
</feature>
<feature type="sequence variant" description="In strain: S2979.">
    <original>A</original>
    <variation>S</variation>
    <location>
        <position position="501"/>
    </location>
</feature>
<feature type="sequence variant" description="In strain: S3041 and S3044.">
    <original>S</original>
    <variation>C</variation>
    <location>
        <position position="502"/>
    </location>
</feature>
<feature type="sequence variant" description="In strain: S2979.">
    <original>PG</original>
    <variation>RC</variation>
    <location>
        <begin position="510"/>
        <end position="511"/>
    </location>
</feature>
<feature type="sequence variant" description="In strain: S3041 and S3044.">
    <original>A</original>
    <variation>G</variation>
    <location>
        <position position="547"/>
    </location>
</feature>
<feature type="sequence variant" description="In strain: S3041 and S3044.">
    <original>E</original>
    <variation>N</variation>
    <location>
        <position position="554"/>
    </location>
</feature>
<feature type="sequence variant" description="In strain: S2978, S2979 and S2993.">
    <original>V</original>
    <variation>I</variation>
    <location>
        <position position="557"/>
    </location>
</feature>
<feature type="sequence variant" description="In strain: S2978, S2979, S2995 and S3057.">
    <original>S</original>
    <variation>G</variation>
    <location>
        <position position="570"/>
    </location>
</feature>
<feature type="sequence variant" description="In strain: S2980 and S2983.">
    <original>GAISSTANSS</original>
    <variation>DIDRRLDKAPAPAGNVCRTA</variation>
    <location>
        <begin position="574"/>
        <end position="583"/>
    </location>
</feature>
<feature type="sequence variant" description="In strain: S3333.">
    <original>GAISSTANSS</original>
    <variation>ETDRRPDKAFAPPSGNVRRA</variation>
    <location>
        <begin position="574"/>
        <end position="583"/>
    </location>
</feature>
<feature type="sequence variant" description="In strain: S2995 and S3057.">
    <original>ISSTANSS</original>
    <variation>KEASPL</variation>
    <location>
        <begin position="576"/>
        <end position="583"/>
    </location>
</feature>
<feature type="sequence variant" description="In strain: S3041 and S3044.">
    <original>S</original>
    <variation>T</variation>
    <location>
        <position position="578"/>
    </location>
</feature>
<feature type="sequence variant" description="In strain: S3015, S3027, S3041 and S3044.">
    <original>A</original>
    <variation>V</variation>
    <location>
        <position position="580"/>
    </location>
</feature>
<evidence type="ECO:0000255" key="1">
    <source>
        <dbReference type="HAMAP-Rule" id="MF_00747"/>
    </source>
</evidence>
<dbReference type="EC" id="2.7.11.5" evidence="1"/>
<dbReference type="EC" id="3.1.3.-" evidence="1"/>
<dbReference type="EMBL" id="U43344">
    <property type="protein sequence ID" value="AAC43868.1"/>
    <property type="molecule type" value="Genomic_DNA"/>
</dbReference>
<dbReference type="EMBL" id="U43345">
    <property type="protein sequence ID" value="AAC43870.1"/>
    <property type="molecule type" value="Genomic_DNA"/>
</dbReference>
<dbReference type="EMBL" id="U43347">
    <property type="protein sequence ID" value="AAC43873.1"/>
    <property type="molecule type" value="Genomic_DNA"/>
</dbReference>
<dbReference type="EMBL" id="U43348">
    <property type="protein sequence ID" value="AAC43875.1"/>
    <property type="molecule type" value="Genomic_DNA"/>
</dbReference>
<dbReference type="EMBL" id="U43349">
    <property type="protein sequence ID" value="AAC43877.1"/>
    <property type="molecule type" value="Genomic_DNA"/>
</dbReference>
<dbReference type="EMBL" id="U43350">
    <property type="protein sequence ID" value="AAC43879.1"/>
    <property type="molecule type" value="Genomic_DNA"/>
</dbReference>
<dbReference type="EMBL" id="U43351">
    <property type="protein sequence ID" value="AAC43881.1"/>
    <property type="molecule type" value="Genomic_DNA"/>
</dbReference>
<dbReference type="EMBL" id="U43352">
    <property type="protein sequence ID" value="AAC43883.1"/>
    <property type="molecule type" value="Genomic_DNA"/>
</dbReference>
<dbReference type="EMBL" id="U43353">
    <property type="protein sequence ID" value="AAC43885.1"/>
    <property type="molecule type" value="Genomic_DNA"/>
</dbReference>
<dbReference type="EMBL" id="U43354">
    <property type="protein sequence ID" value="AAC43887.1"/>
    <property type="molecule type" value="Genomic_DNA"/>
</dbReference>
<dbReference type="EMBL" id="U43355">
    <property type="protein sequence ID" value="AAC43889.1"/>
    <property type="molecule type" value="Genomic_DNA"/>
</dbReference>
<dbReference type="EMBL" id="U43356">
    <property type="protein sequence ID" value="AAC43891.1"/>
    <property type="molecule type" value="Genomic_DNA"/>
</dbReference>
<dbReference type="EMBL" id="U43357">
    <property type="protein sequence ID" value="AAC43893.1"/>
    <property type="molecule type" value="Genomic_DNA"/>
</dbReference>
<dbReference type="EMBL" id="U43358">
    <property type="protein sequence ID" value="AAC43895.1"/>
    <property type="molecule type" value="Genomic_DNA"/>
</dbReference>
<dbReference type="EMBL" id="U43359">
    <property type="protein sequence ID" value="AAC43897.1"/>
    <property type="molecule type" value="Genomic_DNA"/>
</dbReference>
<dbReference type="EMBL" id="AE006468">
    <property type="protein sequence ID" value="AAL23009.1"/>
    <property type="molecule type" value="Genomic_DNA"/>
</dbReference>
<dbReference type="PIR" id="T11210">
    <property type="entry name" value="T11210"/>
</dbReference>
<dbReference type="RefSeq" id="NP_463050.1">
    <property type="nucleotide sequence ID" value="NC_003197.2"/>
</dbReference>
<dbReference type="RefSeq" id="WP_001137266.1">
    <property type="nucleotide sequence ID" value="NC_003197.2"/>
</dbReference>
<dbReference type="SMR" id="P51067"/>
<dbReference type="STRING" id="99287.STM4185"/>
<dbReference type="PaxDb" id="99287-STM4185"/>
<dbReference type="GeneID" id="1255711"/>
<dbReference type="KEGG" id="stm:STM4185"/>
<dbReference type="PATRIC" id="fig|99287.12.peg.4398"/>
<dbReference type="HOGENOM" id="CLU_033804_1_1_6"/>
<dbReference type="OMA" id="EPWYSVG"/>
<dbReference type="PhylomeDB" id="P51067"/>
<dbReference type="BioCyc" id="SENT99287:STM4185-MONOMER"/>
<dbReference type="Proteomes" id="UP000001014">
    <property type="component" value="Chromosome"/>
</dbReference>
<dbReference type="GO" id="GO:0005737">
    <property type="term" value="C:cytoplasm"/>
    <property type="evidence" value="ECO:0007669"/>
    <property type="project" value="UniProtKB-SubCell"/>
</dbReference>
<dbReference type="GO" id="GO:0008772">
    <property type="term" value="F:[isocitrate dehydrogenase (NADP+)] kinase activity"/>
    <property type="evidence" value="ECO:0000318"/>
    <property type="project" value="GO_Central"/>
</dbReference>
<dbReference type="GO" id="GO:0016208">
    <property type="term" value="F:AMP binding"/>
    <property type="evidence" value="ECO:0000318"/>
    <property type="project" value="GO_Central"/>
</dbReference>
<dbReference type="GO" id="GO:0005524">
    <property type="term" value="F:ATP binding"/>
    <property type="evidence" value="ECO:0000318"/>
    <property type="project" value="GO_Central"/>
</dbReference>
<dbReference type="GO" id="GO:0004721">
    <property type="term" value="F:phosphoprotein phosphatase activity"/>
    <property type="evidence" value="ECO:0000318"/>
    <property type="project" value="GO_Central"/>
</dbReference>
<dbReference type="GO" id="GO:0004674">
    <property type="term" value="F:protein serine/threonine kinase activity"/>
    <property type="evidence" value="ECO:0007669"/>
    <property type="project" value="UniProtKB-KW"/>
</dbReference>
<dbReference type="GO" id="GO:0006006">
    <property type="term" value="P:glucose metabolic process"/>
    <property type="evidence" value="ECO:0007669"/>
    <property type="project" value="InterPro"/>
</dbReference>
<dbReference type="GO" id="GO:0006097">
    <property type="term" value="P:glyoxylate cycle"/>
    <property type="evidence" value="ECO:0007669"/>
    <property type="project" value="UniProtKB-UniRule"/>
</dbReference>
<dbReference type="GO" id="GO:0006099">
    <property type="term" value="P:tricarboxylic acid cycle"/>
    <property type="evidence" value="ECO:0007669"/>
    <property type="project" value="UniProtKB-UniRule"/>
</dbReference>
<dbReference type="HAMAP" id="MF_00747">
    <property type="entry name" value="AceK"/>
    <property type="match status" value="1"/>
</dbReference>
<dbReference type="InterPro" id="IPR046855">
    <property type="entry name" value="AceK_kinase"/>
</dbReference>
<dbReference type="InterPro" id="IPR046854">
    <property type="entry name" value="AceK_regulatory"/>
</dbReference>
<dbReference type="InterPro" id="IPR010452">
    <property type="entry name" value="Isocitrate_DH_AceK"/>
</dbReference>
<dbReference type="NCBIfam" id="NF002804">
    <property type="entry name" value="PRK02946.1"/>
    <property type="match status" value="1"/>
</dbReference>
<dbReference type="PANTHER" id="PTHR39559">
    <property type="match status" value="1"/>
</dbReference>
<dbReference type="PANTHER" id="PTHR39559:SF1">
    <property type="entry name" value="ISOCITRATE DEHYDROGENASE KINASE_PHOSPHATASE"/>
    <property type="match status" value="1"/>
</dbReference>
<dbReference type="Pfam" id="PF06315">
    <property type="entry name" value="AceK_kinase"/>
    <property type="match status" value="1"/>
</dbReference>
<dbReference type="Pfam" id="PF20423">
    <property type="entry name" value="AceK_regulatory"/>
    <property type="match status" value="1"/>
</dbReference>
<dbReference type="PIRSF" id="PIRSF000719">
    <property type="entry name" value="AceK"/>
    <property type="match status" value="1"/>
</dbReference>
<keyword id="KW-0067">ATP-binding</keyword>
<keyword id="KW-0963">Cytoplasm</keyword>
<keyword id="KW-0329">Glyoxylate bypass</keyword>
<keyword id="KW-0378">Hydrolase</keyword>
<keyword id="KW-0418">Kinase</keyword>
<keyword id="KW-0547">Nucleotide-binding</keyword>
<keyword id="KW-0904">Protein phosphatase</keyword>
<keyword id="KW-1185">Reference proteome</keyword>
<keyword id="KW-0723">Serine/threonine-protein kinase</keyword>
<keyword id="KW-0808">Transferase</keyword>
<keyword id="KW-0816">Tricarboxylic acid cycle</keyword>
<comment type="function">
    <text evidence="1">Bifunctional enzyme which can phosphorylate or dephosphorylate isocitrate dehydrogenase (IDH) on a specific serine residue. This is a regulatory mechanism which enables bacteria to bypass the Krebs cycle via the glyoxylate shunt in response to the source of carbon. When bacteria are grown on glucose, IDH is fully active and unphosphorylated, but when grown on acetate or ethanol, the activity of IDH declines drastically concomitant with its phosphorylation.</text>
</comment>
<comment type="catalytic activity">
    <reaction evidence="1">
        <text>L-seryl-[isocitrate dehydrogenase] + ATP = O-phospho-L-seryl-[isocitrate dehydrogenase] + ADP + H(+)</text>
        <dbReference type="Rhea" id="RHEA:43540"/>
        <dbReference type="Rhea" id="RHEA-COMP:10605"/>
        <dbReference type="Rhea" id="RHEA-COMP:10606"/>
        <dbReference type="ChEBI" id="CHEBI:15378"/>
        <dbReference type="ChEBI" id="CHEBI:29999"/>
        <dbReference type="ChEBI" id="CHEBI:30616"/>
        <dbReference type="ChEBI" id="CHEBI:83421"/>
        <dbReference type="ChEBI" id="CHEBI:456216"/>
        <dbReference type="EC" id="2.7.11.5"/>
    </reaction>
</comment>
<comment type="subcellular location">
    <subcellularLocation>
        <location evidence="1">Cytoplasm</location>
    </subcellularLocation>
</comment>
<comment type="similarity">
    <text evidence="1">Belongs to the AceK family.</text>
</comment>
<reference key="1">
    <citation type="journal article" date="1997" name="Genetics">
        <title>Size and sequence polymorphism in the isocitrate dehydrogenase kinase/phosphatase gene (aceK) and flanking regions in Salmonella enterica and Escherichia coli.</title>
        <authorList>
            <person name="Nelson K."/>
            <person name="Wang F.S."/>
            <person name="Boyd E.F."/>
            <person name="Selander R.K."/>
        </authorList>
    </citation>
    <scope>NUCLEOTIDE SEQUENCE [GENOMIC DNA]</scope>
    <source>
        <strain>S2978</strain>
        <strain>S2979</strain>
        <strain>S2980</strain>
        <strain>S2983</strain>
        <strain>S2993</strain>
        <strain>S2995</strain>
        <strain>S3013</strain>
        <strain>S3014</strain>
        <strain>S3015</strain>
        <strain>S3027</strain>
        <strain>S3041</strain>
        <strain>S3044</strain>
        <strain>S3057</strain>
        <strain>S3333</strain>
        <strain>S4194</strain>
    </source>
</reference>
<reference key="2">
    <citation type="journal article" date="2001" name="Nature">
        <title>Complete genome sequence of Salmonella enterica serovar Typhimurium LT2.</title>
        <authorList>
            <person name="McClelland M."/>
            <person name="Sanderson K.E."/>
            <person name="Spieth J."/>
            <person name="Clifton S.W."/>
            <person name="Latreille P."/>
            <person name="Courtney L."/>
            <person name="Porwollik S."/>
            <person name="Ali J."/>
            <person name="Dante M."/>
            <person name="Du F."/>
            <person name="Hou S."/>
            <person name="Layman D."/>
            <person name="Leonard S."/>
            <person name="Nguyen C."/>
            <person name="Scott K."/>
            <person name="Holmes A."/>
            <person name="Grewal N."/>
            <person name="Mulvaney E."/>
            <person name="Ryan E."/>
            <person name="Sun H."/>
            <person name="Florea L."/>
            <person name="Miller W."/>
            <person name="Stoneking T."/>
            <person name="Nhan M."/>
            <person name="Waterston R."/>
            <person name="Wilson R.K."/>
        </authorList>
    </citation>
    <scope>NUCLEOTIDE SEQUENCE [LARGE SCALE GENOMIC DNA]</scope>
    <source>
        <strain>LT2 / SGSC1412 / ATCC 700720</strain>
    </source>
</reference>
<sequence length="583" mass="67956">MPRGLELLIAQTILQGFDAQYGRFLEVTSGAQQRFEQADWHAVQQAMKSRIHLYDHHVGLVVEQLRCITDGKSTDADFLLRVKEHYTRLLPDYPRFEIAESFFNSVYCRLFDHRSLTPERLFIFSSQPERRFRTIPRPLAKDFFPDHGWEPLLMRILSDLPLRLPWQNKSRDIRYIIAHLTETLGEDALPRCHVQVANELFYRNKAAWLVGKLTTPDGTLPFLLPIHRTDEGELFVDTCLTTTAEASIVFGFARSYFMVYAPLPAALVEWLREILPGKTTAELYMAIGCQKHAKTESYREYLCYLAESDEKFIEAPGIRGMVMLVFTLPGFDRVFKIIKDKFAPQKEMSAAHVRACYQLVKEHDRVGRMADTQEFENFVLDKRQIDPALMALLRQEAPEKITDLGEHIVIRHLYIERRMVPLNIWLEQVEGQQLRDAIEEYGNAIRQLAAANIFPGDMLFKNFGVTRHGRVVFYDYDEICYMTEVNFRDIPPARYPEDELASEPWYSVSPGDVFPEEFRHWLCADPRIGPLFEEMHADLFRADYWRALQTRIKEGHVEDVYAYRRRQRFSVRYGAISSTANSS</sequence>
<gene>
    <name evidence="1" type="primary">aceK</name>
    <name type="ordered locus">STM4185</name>
</gene>
<name>ACEK_SALTY</name>
<accession>P51067</accession>